<accession>Q6R311</accession>
<accession>B2ZZ12</accession>
<proteinExistence type="evidence at transcript level"/>
<comment type="function">
    <text evidence="1 3">Involved in the biosynthesis of volatile esters which confer ripe apple fruit flavor (Ref.2). Alcohol acyl transferase that can use a wide range of alcohols as substrate to produce esters (By similarity).</text>
</comment>
<comment type="tissue specificity">
    <text evidence="3">Highly expressed in the cortex and skin of ripe fruit.</text>
</comment>
<comment type="developmental stage">
    <text evidence="3">Accumulates progressively during fruit development.</text>
</comment>
<comment type="induction">
    <text evidence="3">Slightly induced by ethylene.</text>
</comment>
<comment type="similarity">
    <text evidence="5">Belongs to the plant acyltransferase family.</text>
</comment>
<keyword id="KW-0808">Transferase</keyword>
<reference key="1">
    <citation type="journal article" date="2006" name="Phytochemistry">
        <title>Molecular cloning and expression of a gene encoding alcohol acyltransferase (MdAAT2) from apple (cv. Golden Delicious).</title>
        <authorList>
            <person name="Li D."/>
            <person name="Xu Y."/>
            <person name="Xu G."/>
            <person name="Gu L."/>
            <person name="Li D."/>
            <person name="Shu H."/>
        </authorList>
    </citation>
    <scope>NUCLEOTIDE SEQUENCE [MRNA]</scope>
    <source>
        <strain>cv. Golden Delicious</strain>
    </source>
</reference>
<reference key="2">
    <citation type="journal article" date="2010" name="Food Chem.">
        <title>Emitted and endogenous volatiles in 'Tsugaru' apple: The mechanism of ester and (E,E)-alpha-farnesene accumulation.</title>
        <authorList>
            <person name="Ban Y."/>
            <person name="Oyama-Okubo N."/>
            <person name="Honda C."/>
            <person name="Nakayama M."/>
            <person name="Moriguchi T."/>
        </authorList>
        <dbReference type="AGRICOLA" id="IND44252665"/>
    </citation>
    <scope>NUCLEOTIDE SEQUENCE [MRNA] OF 227-362</scope>
    <scope>FUNCTION</scope>
    <scope>TISSUE SPECIFICITY</scope>
    <scope>DEVELOPMENTAL STAGE</scope>
    <scope>INDUCTION BY ETHYLENE</scope>
    <source>
        <strain>cv. Tsugaru</strain>
        <tissue>Fruit cortical tissue</tissue>
    </source>
</reference>
<protein>
    <recommendedName>
        <fullName evidence="4">Alcohol acyl transferase 2</fullName>
        <shortName evidence="4">MdAAT2</shortName>
        <ecNumber evidence="1">2.3.1.-</ecNumber>
    </recommendedName>
</protein>
<name>AAT2_MALDO</name>
<dbReference type="EC" id="2.3.1.-" evidence="1"/>
<dbReference type="EMBL" id="AY517491">
    <property type="protein sequence ID" value="AAS79797.1"/>
    <property type="molecule type" value="mRNA"/>
</dbReference>
<dbReference type="EMBL" id="AB370229">
    <property type="protein sequence ID" value="BAG48171.1"/>
    <property type="molecule type" value="mRNA"/>
</dbReference>
<dbReference type="SMR" id="Q6R311"/>
<dbReference type="GO" id="GO:0016746">
    <property type="term" value="F:acyltransferase activity"/>
    <property type="evidence" value="ECO:0000250"/>
    <property type="project" value="UniProtKB"/>
</dbReference>
<dbReference type="GO" id="GO:0006066">
    <property type="term" value="P:alcohol metabolic process"/>
    <property type="evidence" value="ECO:0000250"/>
    <property type="project" value="UniProtKB"/>
</dbReference>
<dbReference type="GO" id="GO:0009836">
    <property type="term" value="P:fruit ripening, climacteric"/>
    <property type="evidence" value="ECO:0000270"/>
    <property type="project" value="UniProtKB"/>
</dbReference>
<dbReference type="GO" id="GO:0009723">
    <property type="term" value="P:response to ethylene"/>
    <property type="evidence" value="ECO:0000270"/>
    <property type="project" value="UniProtKB"/>
</dbReference>
<dbReference type="Gene3D" id="3.30.559.10">
    <property type="entry name" value="Chloramphenicol acetyltransferase-like domain"/>
    <property type="match status" value="2"/>
</dbReference>
<dbReference type="InterPro" id="IPR023213">
    <property type="entry name" value="CAT-like_dom_sf"/>
</dbReference>
<dbReference type="InterPro" id="IPR050898">
    <property type="entry name" value="Plant_acyltransferase"/>
</dbReference>
<dbReference type="PANTHER" id="PTHR31147">
    <property type="entry name" value="ACYL TRANSFERASE 4"/>
    <property type="match status" value="1"/>
</dbReference>
<dbReference type="PANTHER" id="PTHR31147:SF66">
    <property type="entry name" value="OS05G0315700 PROTEIN"/>
    <property type="match status" value="1"/>
</dbReference>
<dbReference type="Pfam" id="PF02458">
    <property type="entry name" value="Transferase"/>
    <property type="match status" value="1"/>
</dbReference>
<organism>
    <name type="scientific">Malus domestica</name>
    <name type="common">Apple</name>
    <name type="synonym">Pyrus malus</name>
    <dbReference type="NCBI Taxonomy" id="3750"/>
    <lineage>
        <taxon>Eukaryota</taxon>
        <taxon>Viridiplantae</taxon>
        <taxon>Streptophyta</taxon>
        <taxon>Embryophyta</taxon>
        <taxon>Tracheophyta</taxon>
        <taxon>Spermatophyta</taxon>
        <taxon>Magnoliopsida</taxon>
        <taxon>eudicotyledons</taxon>
        <taxon>Gunneridae</taxon>
        <taxon>Pentapetalae</taxon>
        <taxon>rosids</taxon>
        <taxon>fabids</taxon>
        <taxon>Rosales</taxon>
        <taxon>Rosaceae</taxon>
        <taxon>Amygdaloideae</taxon>
        <taxon>Maleae</taxon>
        <taxon>Malus</taxon>
    </lineage>
</organism>
<feature type="chain" id="PRO_0000451707" description="Alcohol acyl transferase 2">
    <location>
        <begin position="1"/>
        <end position="459"/>
    </location>
</feature>
<feature type="active site" description="Proton acceptor" evidence="2">
    <location>
        <position position="164"/>
    </location>
</feature>
<feature type="active site" description="Proton acceptor" evidence="2">
    <location>
        <position position="385"/>
    </location>
</feature>
<feature type="sequence conflict" description="In Ref. 2; BAG48171." evidence="5" ref="2">
    <original>A</original>
    <variation>T</variation>
    <location>
        <position position="269"/>
    </location>
</feature>
<sequence>MMPFSVLQVKRLQLELITPAKPTLQEAKFLSDIDDQEGLRFQVPVIMCYKDNPSLNKNCNPVKVIREALSRALVYYYPLAGRLKEGPNRKLMVDCNGEGILFVEASADVTLEQLGDKILPPCPLLEEFLFNFPGSDGIIGCPLLLVQVTCLTCGGFILALRVNHTMCDAPGLLLFLTAIAEMARGAHAPSILPVWERELLFSRDPPRITCAHHEYEDVIDHSDGLYASSNQSNMVQRSFYFGAKEMRVLRKQIPPHLISTCSTFDLITACLWKCRTLALNINPKEAVRVSCIVNARGKHNNVRLPLGYYGNAFAFPAAISKAEPLCKNPLGYALELVKKAKATMNEEYLRSVADLLVLRGRPQYSSTGSYLIVSDNTRAGFGDVNFGWGQPVFAGPAKALDLISFYVQHKNNTEDGILVPMCLPSSAMERFQQELERITQEPKEDICNNLRSTRIMSMM</sequence>
<gene>
    <name evidence="4" type="primary">AAT2</name>
</gene>
<evidence type="ECO:0000250" key="1">
    <source>
        <dbReference type="UniProtKB" id="Q64FJ6"/>
    </source>
</evidence>
<evidence type="ECO:0000250" key="2">
    <source>
        <dbReference type="UniProtKB" id="Q9FI78"/>
    </source>
</evidence>
<evidence type="ECO:0000269" key="3">
    <source ref="2"/>
</evidence>
<evidence type="ECO:0000303" key="4">
    <source>
    </source>
</evidence>
<evidence type="ECO:0000305" key="5"/>